<accession>Q8ZCC0</accession>
<accession>Q0WCJ5</accession>
<name>SYC_YERPE</name>
<reference key="1">
    <citation type="journal article" date="2001" name="Nature">
        <title>Genome sequence of Yersinia pestis, the causative agent of plague.</title>
        <authorList>
            <person name="Parkhill J."/>
            <person name="Wren B.W."/>
            <person name="Thomson N.R."/>
            <person name="Titball R.W."/>
            <person name="Holden M.T.G."/>
            <person name="Prentice M.B."/>
            <person name="Sebaihia M."/>
            <person name="James K.D."/>
            <person name="Churcher C.M."/>
            <person name="Mungall K.L."/>
            <person name="Baker S."/>
            <person name="Basham D."/>
            <person name="Bentley S.D."/>
            <person name="Brooks K."/>
            <person name="Cerdeno-Tarraga A.-M."/>
            <person name="Chillingworth T."/>
            <person name="Cronin A."/>
            <person name="Davies R.M."/>
            <person name="Davis P."/>
            <person name="Dougan G."/>
            <person name="Feltwell T."/>
            <person name="Hamlin N."/>
            <person name="Holroyd S."/>
            <person name="Jagels K."/>
            <person name="Karlyshev A.V."/>
            <person name="Leather S."/>
            <person name="Moule S."/>
            <person name="Oyston P.C.F."/>
            <person name="Quail M.A."/>
            <person name="Rutherford K.M."/>
            <person name="Simmonds M."/>
            <person name="Skelton J."/>
            <person name="Stevens K."/>
            <person name="Whitehead S."/>
            <person name="Barrell B.G."/>
        </authorList>
    </citation>
    <scope>NUCLEOTIDE SEQUENCE [LARGE SCALE GENOMIC DNA]</scope>
    <source>
        <strain>CO-92 / Biovar Orientalis</strain>
    </source>
</reference>
<reference key="2">
    <citation type="journal article" date="2002" name="J. Bacteriol.">
        <title>Genome sequence of Yersinia pestis KIM.</title>
        <authorList>
            <person name="Deng W."/>
            <person name="Burland V."/>
            <person name="Plunkett G. III"/>
            <person name="Boutin A."/>
            <person name="Mayhew G.F."/>
            <person name="Liss P."/>
            <person name="Perna N.T."/>
            <person name="Rose D.J."/>
            <person name="Mau B."/>
            <person name="Zhou S."/>
            <person name="Schwartz D.C."/>
            <person name="Fetherston J.D."/>
            <person name="Lindler L.E."/>
            <person name="Brubaker R.R."/>
            <person name="Plano G.V."/>
            <person name="Straley S.C."/>
            <person name="McDonough K.A."/>
            <person name="Nilles M.L."/>
            <person name="Matson J.S."/>
            <person name="Blattner F.R."/>
            <person name="Perry R.D."/>
        </authorList>
    </citation>
    <scope>NUCLEOTIDE SEQUENCE [LARGE SCALE GENOMIC DNA]</scope>
    <source>
        <strain>KIM10+ / Biovar Mediaevalis</strain>
    </source>
</reference>
<reference key="3">
    <citation type="journal article" date="2004" name="DNA Res.">
        <title>Complete genome sequence of Yersinia pestis strain 91001, an isolate avirulent to humans.</title>
        <authorList>
            <person name="Song Y."/>
            <person name="Tong Z."/>
            <person name="Wang J."/>
            <person name="Wang L."/>
            <person name="Guo Z."/>
            <person name="Han Y."/>
            <person name="Zhang J."/>
            <person name="Pei D."/>
            <person name="Zhou D."/>
            <person name="Qin H."/>
            <person name="Pang X."/>
            <person name="Han Y."/>
            <person name="Zhai J."/>
            <person name="Li M."/>
            <person name="Cui B."/>
            <person name="Qi Z."/>
            <person name="Jin L."/>
            <person name="Dai R."/>
            <person name="Chen F."/>
            <person name="Li S."/>
            <person name="Ye C."/>
            <person name="Du Z."/>
            <person name="Lin W."/>
            <person name="Wang J."/>
            <person name="Yu J."/>
            <person name="Yang H."/>
            <person name="Wang J."/>
            <person name="Huang P."/>
            <person name="Yang R."/>
        </authorList>
    </citation>
    <scope>NUCLEOTIDE SEQUENCE [LARGE SCALE GENOMIC DNA]</scope>
    <source>
        <strain>91001 / Biovar Mediaevalis</strain>
    </source>
</reference>
<comment type="catalytic activity">
    <reaction evidence="1">
        <text>tRNA(Cys) + L-cysteine + ATP = L-cysteinyl-tRNA(Cys) + AMP + diphosphate</text>
        <dbReference type="Rhea" id="RHEA:17773"/>
        <dbReference type="Rhea" id="RHEA-COMP:9661"/>
        <dbReference type="Rhea" id="RHEA-COMP:9679"/>
        <dbReference type="ChEBI" id="CHEBI:30616"/>
        <dbReference type="ChEBI" id="CHEBI:33019"/>
        <dbReference type="ChEBI" id="CHEBI:35235"/>
        <dbReference type="ChEBI" id="CHEBI:78442"/>
        <dbReference type="ChEBI" id="CHEBI:78517"/>
        <dbReference type="ChEBI" id="CHEBI:456215"/>
        <dbReference type="EC" id="6.1.1.16"/>
    </reaction>
</comment>
<comment type="cofactor">
    <cofactor evidence="1">
        <name>Zn(2+)</name>
        <dbReference type="ChEBI" id="CHEBI:29105"/>
    </cofactor>
    <text evidence="1">Binds 1 zinc ion per subunit.</text>
</comment>
<comment type="subunit">
    <text evidence="1">Monomer.</text>
</comment>
<comment type="subcellular location">
    <subcellularLocation>
        <location evidence="1">Cytoplasm</location>
    </subcellularLocation>
</comment>
<comment type="similarity">
    <text evidence="1">Belongs to the class-I aminoacyl-tRNA synthetase family.</text>
</comment>
<comment type="sequence caution" evidence="2">
    <conflict type="erroneous initiation">
        <sequence resource="EMBL-CDS" id="AAM84685"/>
    </conflict>
</comment>
<comment type="sequence caution" evidence="2">
    <conflict type="erroneous initiation">
        <sequence resource="EMBL-CDS" id="AAS61111"/>
    </conflict>
</comment>
<evidence type="ECO:0000255" key="1">
    <source>
        <dbReference type="HAMAP-Rule" id="MF_00041"/>
    </source>
</evidence>
<evidence type="ECO:0000305" key="2"/>
<feature type="chain" id="PRO_0000159529" description="Cysteine--tRNA ligase">
    <location>
        <begin position="1"/>
        <end position="461"/>
    </location>
</feature>
<feature type="short sequence motif" description="'HIGH' region">
    <location>
        <begin position="30"/>
        <end position="40"/>
    </location>
</feature>
<feature type="short sequence motif" description="'KMSKS' region">
    <location>
        <begin position="266"/>
        <end position="270"/>
    </location>
</feature>
<feature type="binding site" evidence="1">
    <location>
        <position position="28"/>
    </location>
    <ligand>
        <name>Zn(2+)</name>
        <dbReference type="ChEBI" id="CHEBI:29105"/>
    </ligand>
</feature>
<feature type="binding site" evidence="1">
    <location>
        <position position="209"/>
    </location>
    <ligand>
        <name>Zn(2+)</name>
        <dbReference type="ChEBI" id="CHEBI:29105"/>
    </ligand>
</feature>
<feature type="binding site" evidence="1">
    <location>
        <position position="234"/>
    </location>
    <ligand>
        <name>Zn(2+)</name>
        <dbReference type="ChEBI" id="CHEBI:29105"/>
    </ligand>
</feature>
<feature type="binding site" evidence="1">
    <location>
        <position position="238"/>
    </location>
    <ligand>
        <name>Zn(2+)</name>
        <dbReference type="ChEBI" id="CHEBI:29105"/>
    </ligand>
</feature>
<feature type="binding site" evidence="1">
    <location>
        <position position="269"/>
    </location>
    <ligand>
        <name>ATP</name>
        <dbReference type="ChEBI" id="CHEBI:30616"/>
    </ligand>
</feature>
<gene>
    <name evidence="1" type="primary">cysS</name>
    <name type="ordered locus">YPO3073</name>
    <name type="ordered locus">y1107</name>
    <name type="ordered locus">YP_0852</name>
</gene>
<keyword id="KW-0030">Aminoacyl-tRNA synthetase</keyword>
<keyword id="KW-0067">ATP-binding</keyword>
<keyword id="KW-0963">Cytoplasm</keyword>
<keyword id="KW-0436">Ligase</keyword>
<keyword id="KW-0479">Metal-binding</keyword>
<keyword id="KW-0547">Nucleotide-binding</keyword>
<keyword id="KW-0648">Protein biosynthesis</keyword>
<keyword id="KW-1185">Reference proteome</keyword>
<keyword id="KW-0862">Zinc</keyword>
<proteinExistence type="inferred from homology"/>
<protein>
    <recommendedName>
        <fullName evidence="1">Cysteine--tRNA ligase</fullName>
        <ecNumber evidence="1">6.1.1.16</ecNumber>
    </recommendedName>
    <alternativeName>
        <fullName evidence="1">Cysteinyl-tRNA synthetase</fullName>
        <shortName evidence="1">CysRS</shortName>
    </alternativeName>
</protein>
<organism>
    <name type="scientific">Yersinia pestis</name>
    <dbReference type="NCBI Taxonomy" id="632"/>
    <lineage>
        <taxon>Bacteria</taxon>
        <taxon>Pseudomonadati</taxon>
        <taxon>Pseudomonadota</taxon>
        <taxon>Gammaproteobacteria</taxon>
        <taxon>Enterobacterales</taxon>
        <taxon>Yersiniaceae</taxon>
        <taxon>Yersinia</taxon>
    </lineage>
</organism>
<sequence>MLKIFNTLSRQKEEFKPIHAGKVGMYVCGITIYDLCHIGHGRTFVAFDVVARYLRYLGYSLTYVRNVTDVDDKIIKRAIENNETCEQLTTRMLAEMHKDFDALNLERPDLEPRATHHIAEIIEMTERLIARGHAYVASNGDVMFAVDSDPDYGVLSRQDLDQLQAGARVEVADVKRNPMDFVLWKMSKPGEPRWESPWGPGRPGWHIECSAMNGKQLGAHFDIHGGGSDLMFPHHENEIAQSTCAHDGPYVNYWMHSGMVMIDKEKMSKSLNNFFTIRDVLAYYDAETVRYFLMSGHYRSQLNYSEENLKQARASLERLYTALRGTDANATPAGGAEFEARFRTAMDDDFNTPEAYSVLFDIAREVNRLKNEDMAAANGLAAELRKLAQVLGLLEQDPELFLQGGAQADDDEVAKIEALIKQRNDARSSKNWALADAARDQLNELGIVLEDGPQGTTWRRK</sequence>
<dbReference type="EC" id="6.1.1.16" evidence="1"/>
<dbReference type="EMBL" id="AL590842">
    <property type="protein sequence ID" value="CAL21675.1"/>
    <property type="molecule type" value="Genomic_DNA"/>
</dbReference>
<dbReference type="EMBL" id="AE009952">
    <property type="protein sequence ID" value="AAM84685.1"/>
    <property type="status" value="ALT_INIT"/>
    <property type="molecule type" value="Genomic_DNA"/>
</dbReference>
<dbReference type="EMBL" id="AE017042">
    <property type="protein sequence ID" value="AAS61111.1"/>
    <property type="status" value="ALT_INIT"/>
    <property type="molecule type" value="Genomic_DNA"/>
</dbReference>
<dbReference type="PIR" id="AH0373">
    <property type="entry name" value="AH0373"/>
</dbReference>
<dbReference type="RefSeq" id="WP_002222677.1">
    <property type="nucleotide sequence ID" value="NZ_WUCM01000009.1"/>
</dbReference>
<dbReference type="RefSeq" id="YP_002347993.1">
    <property type="nucleotide sequence ID" value="NC_003143.1"/>
</dbReference>
<dbReference type="SMR" id="Q8ZCC0"/>
<dbReference type="STRING" id="214092.YPO3073"/>
<dbReference type="PaxDb" id="214092-YPO3073"/>
<dbReference type="DNASU" id="1146054"/>
<dbReference type="EnsemblBacteria" id="AAS61111">
    <property type="protein sequence ID" value="AAS61111"/>
    <property type="gene ID" value="YP_0852"/>
</dbReference>
<dbReference type="GeneID" id="57975631"/>
<dbReference type="KEGG" id="ype:YPO3073"/>
<dbReference type="KEGG" id="ypk:y1107"/>
<dbReference type="KEGG" id="ypm:YP_0852"/>
<dbReference type="PATRIC" id="fig|1028802.3.peg.1594"/>
<dbReference type="eggNOG" id="COG0215">
    <property type="taxonomic scope" value="Bacteria"/>
</dbReference>
<dbReference type="HOGENOM" id="CLU_013528_0_1_6"/>
<dbReference type="OMA" id="IMRWPSP"/>
<dbReference type="OrthoDB" id="9815130at2"/>
<dbReference type="Proteomes" id="UP000000815">
    <property type="component" value="Chromosome"/>
</dbReference>
<dbReference type="Proteomes" id="UP000001019">
    <property type="component" value="Chromosome"/>
</dbReference>
<dbReference type="Proteomes" id="UP000002490">
    <property type="component" value="Chromosome"/>
</dbReference>
<dbReference type="GO" id="GO:0005737">
    <property type="term" value="C:cytoplasm"/>
    <property type="evidence" value="ECO:0000318"/>
    <property type="project" value="GO_Central"/>
</dbReference>
<dbReference type="GO" id="GO:0005829">
    <property type="term" value="C:cytosol"/>
    <property type="evidence" value="ECO:0000318"/>
    <property type="project" value="GO_Central"/>
</dbReference>
<dbReference type="GO" id="GO:0005524">
    <property type="term" value="F:ATP binding"/>
    <property type="evidence" value="ECO:0000318"/>
    <property type="project" value="GO_Central"/>
</dbReference>
<dbReference type="GO" id="GO:0004817">
    <property type="term" value="F:cysteine-tRNA ligase activity"/>
    <property type="evidence" value="ECO:0000318"/>
    <property type="project" value="GO_Central"/>
</dbReference>
<dbReference type="GO" id="GO:0008270">
    <property type="term" value="F:zinc ion binding"/>
    <property type="evidence" value="ECO:0007669"/>
    <property type="project" value="UniProtKB-UniRule"/>
</dbReference>
<dbReference type="GO" id="GO:0006423">
    <property type="term" value="P:cysteinyl-tRNA aminoacylation"/>
    <property type="evidence" value="ECO:0000318"/>
    <property type="project" value="GO_Central"/>
</dbReference>
<dbReference type="CDD" id="cd07963">
    <property type="entry name" value="Anticodon_Ia_Cys"/>
    <property type="match status" value="1"/>
</dbReference>
<dbReference type="CDD" id="cd00672">
    <property type="entry name" value="CysRS_core"/>
    <property type="match status" value="1"/>
</dbReference>
<dbReference type="FunFam" id="1.20.120.1910:FF:000001">
    <property type="entry name" value="Cysteine--tRNA ligase"/>
    <property type="match status" value="1"/>
</dbReference>
<dbReference type="FunFam" id="3.40.50.620:FF:000009">
    <property type="entry name" value="Cysteine--tRNA ligase"/>
    <property type="match status" value="1"/>
</dbReference>
<dbReference type="Gene3D" id="1.20.120.1910">
    <property type="entry name" value="Cysteine-tRNA ligase, C-terminal anti-codon recognition domain"/>
    <property type="match status" value="1"/>
</dbReference>
<dbReference type="Gene3D" id="3.40.50.620">
    <property type="entry name" value="HUPs"/>
    <property type="match status" value="1"/>
</dbReference>
<dbReference type="HAMAP" id="MF_00041">
    <property type="entry name" value="Cys_tRNA_synth"/>
    <property type="match status" value="1"/>
</dbReference>
<dbReference type="InterPro" id="IPR015803">
    <property type="entry name" value="Cys-tRNA-ligase"/>
</dbReference>
<dbReference type="InterPro" id="IPR015273">
    <property type="entry name" value="Cys-tRNA-synt_Ia_DALR"/>
</dbReference>
<dbReference type="InterPro" id="IPR024909">
    <property type="entry name" value="Cys-tRNA/MSH_ligase"/>
</dbReference>
<dbReference type="InterPro" id="IPR056411">
    <property type="entry name" value="CysS_C"/>
</dbReference>
<dbReference type="InterPro" id="IPR014729">
    <property type="entry name" value="Rossmann-like_a/b/a_fold"/>
</dbReference>
<dbReference type="InterPro" id="IPR032678">
    <property type="entry name" value="tRNA-synt_1_cat_dom"/>
</dbReference>
<dbReference type="InterPro" id="IPR009080">
    <property type="entry name" value="tRNAsynth_Ia_anticodon-bd"/>
</dbReference>
<dbReference type="NCBIfam" id="TIGR00435">
    <property type="entry name" value="cysS"/>
    <property type="match status" value="1"/>
</dbReference>
<dbReference type="PANTHER" id="PTHR10890:SF3">
    <property type="entry name" value="CYSTEINE--TRNA LIGASE, CYTOPLASMIC"/>
    <property type="match status" value="1"/>
</dbReference>
<dbReference type="PANTHER" id="PTHR10890">
    <property type="entry name" value="CYSTEINYL-TRNA SYNTHETASE"/>
    <property type="match status" value="1"/>
</dbReference>
<dbReference type="Pfam" id="PF23493">
    <property type="entry name" value="CysS_C"/>
    <property type="match status" value="1"/>
</dbReference>
<dbReference type="Pfam" id="PF09190">
    <property type="entry name" value="DALR_2"/>
    <property type="match status" value="1"/>
</dbReference>
<dbReference type="Pfam" id="PF01406">
    <property type="entry name" value="tRNA-synt_1e"/>
    <property type="match status" value="1"/>
</dbReference>
<dbReference type="PRINTS" id="PR00983">
    <property type="entry name" value="TRNASYNTHCYS"/>
</dbReference>
<dbReference type="SMART" id="SM00840">
    <property type="entry name" value="DALR_2"/>
    <property type="match status" value="1"/>
</dbReference>
<dbReference type="SUPFAM" id="SSF47323">
    <property type="entry name" value="Anticodon-binding domain of a subclass of class I aminoacyl-tRNA synthetases"/>
    <property type="match status" value="1"/>
</dbReference>
<dbReference type="SUPFAM" id="SSF52374">
    <property type="entry name" value="Nucleotidylyl transferase"/>
    <property type="match status" value="1"/>
</dbReference>